<proteinExistence type="predicted"/>
<name>YR365_MIMIV</name>
<dbReference type="EMBL" id="AY653733">
    <property type="protein sequence ID" value="AAV50634.1"/>
    <property type="molecule type" value="Genomic_DNA"/>
</dbReference>
<dbReference type="SMR" id="Q5UR21"/>
<dbReference type="Proteomes" id="UP000001134">
    <property type="component" value="Genome"/>
</dbReference>
<dbReference type="InterPro" id="IPR036770">
    <property type="entry name" value="Ankyrin_rpt-contain_sf"/>
</dbReference>
<dbReference type="SUPFAM" id="SSF48403">
    <property type="entry name" value="Ankyrin repeat"/>
    <property type="match status" value="1"/>
</dbReference>
<keyword id="KW-0175">Coiled coil</keyword>
<keyword id="KW-1185">Reference proteome</keyword>
<evidence type="ECO:0000255" key="1"/>
<gene>
    <name type="ordered locus">MIMI_R365</name>
</gene>
<protein>
    <recommendedName>
        <fullName>Uncharacterized protein R365</fullName>
    </recommendedName>
</protein>
<sequence>MNLLNMFNGYKKIPVEYFAQEESMEQLKDINTKIDNSEKKISLENFIDKCEKSDPISENDFLDYPEHIVRSYVKHNVESFIDNNKTNLLNKLLILFPESVFYMASCEKFITIFSKVKDNINGLLINSDKQTFLHKILTLEDSMIILESNIDLNVNQIDINGDTFVSNYYDNIDALYKKNNNTNYENHHTSSKKMIKFVELLVKKNYNVNRVDNINRSIINLCFRVNVNKSIIFSYKNMAYKQQYFFIDYYCLYNLFQMKKLIPL</sequence>
<reference key="1">
    <citation type="journal article" date="2004" name="Science">
        <title>The 1.2-megabase genome sequence of Mimivirus.</title>
        <authorList>
            <person name="Raoult D."/>
            <person name="Audic S."/>
            <person name="Robert C."/>
            <person name="Abergel C."/>
            <person name="Renesto P."/>
            <person name="Ogata H."/>
            <person name="La Scola B."/>
            <person name="Susan M."/>
            <person name="Claverie J.-M."/>
        </authorList>
    </citation>
    <scope>NUCLEOTIDE SEQUENCE [LARGE SCALE GENOMIC DNA]</scope>
    <source>
        <strain>Rowbotham-Bradford</strain>
    </source>
</reference>
<organism>
    <name type="scientific">Acanthamoeba polyphaga mimivirus</name>
    <name type="common">APMV</name>
    <dbReference type="NCBI Taxonomy" id="212035"/>
    <lineage>
        <taxon>Viruses</taxon>
        <taxon>Varidnaviria</taxon>
        <taxon>Bamfordvirae</taxon>
        <taxon>Nucleocytoviricota</taxon>
        <taxon>Megaviricetes</taxon>
        <taxon>Imitervirales</taxon>
        <taxon>Mimiviridae</taxon>
        <taxon>Megamimivirinae</taxon>
        <taxon>Mimivirus</taxon>
        <taxon>Mimivirus bradfordmassiliense</taxon>
    </lineage>
</organism>
<accession>Q5UR21</accession>
<organismHost>
    <name type="scientific">Acanthamoeba polyphaga</name>
    <name type="common">Amoeba</name>
    <dbReference type="NCBI Taxonomy" id="5757"/>
</organismHost>
<feature type="chain" id="PRO_0000244015" description="Uncharacterized protein R365">
    <location>
        <begin position="1"/>
        <end position="264"/>
    </location>
</feature>
<feature type="coiled-coil region" evidence="1">
    <location>
        <begin position="19"/>
        <end position="45"/>
    </location>
</feature>